<protein>
    <recommendedName>
        <fullName>Serpin E3</fullName>
    </recommendedName>
</protein>
<accession>A6QQ92</accession>
<feature type="signal peptide" evidence="2">
    <location>
        <begin position="1"/>
        <end position="19"/>
    </location>
</feature>
<feature type="chain" id="PRO_0000340683" description="Serpin E3">
    <location>
        <begin position="20"/>
        <end position="400"/>
    </location>
</feature>
<feature type="site" description="Reactive bond" evidence="2">
    <location>
        <begin position="365"/>
        <end position="366"/>
    </location>
</feature>
<feature type="glycosylation site" description="N-linked (GlcNAc...) asparagine" evidence="2">
    <location>
        <position position="46"/>
    </location>
</feature>
<name>SERP3_BOVIN</name>
<sequence length="400" mass="43923">MQSLLLALLLLPVCSPGGASNLHEDLTLLRTDLALRLYRSVAAAGNQTNLVLSPAGAFIPLELLQFGARGNTGRQLAQALGYTVHDPKVREWLQTVYAVLPSTNPGAKLELACTLYVQTGTPLAPCFVEQVSRWANSSLELANFREPNSTAMLANGWGPRQTAGDEPVGSAWERGGGAESAQLVLVSTVSFQSAWRHQFSSDTQLLPFTCAQGLTLEVPMMYQMAEVNFGQFQDPAGHQVGVLELPYLGNVASLLLVLPRDRDTPLSHIEPHLTASLLHAWTASLKRARMEVFLPRFRIQNHFDLKNILYSWGVIDLFDPLRANLKGISGQDGFYVSEAIHKAKIEVSEEGTKASAATALLLLKRSRIPIFKADRPFIFFLREPNTAFVFSIGRVLNPLH</sequence>
<keyword id="KW-0325">Glycoprotein</keyword>
<keyword id="KW-0646">Protease inhibitor</keyword>
<keyword id="KW-1185">Reference proteome</keyword>
<keyword id="KW-0964">Secreted</keyword>
<keyword id="KW-0722">Serine protease inhibitor</keyword>
<keyword id="KW-0732">Signal</keyword>
<proteinExistence type="evidence at transcript level"/>
<dbReference type="EMBL" id="AAFC03087391">
    <property type="status" value="NOT_ANNOTATED_CDS"/>
    <property type="molecule type" value="Genomic_DNA"/>
</dbReference>
<dbReference type="EMBL" id="AAFC03012792">
    <property type="status" value="NOT_ANNOTATED_CDS"/>
    <property type="molecule type" value="Genomic_DNA"/>
</dbReference>
<dbReference type="EMBL" id="BC149709">
    <property type="status" value="NOT_ANNOTATED_CDS"/>
    <property type="molecule type" value="mRNA"/>
</dbReference>
<dbReference type="RefSeq" id="NP_001093829.1">
    <property type="nucleotide sequence ID" value="NM_001100359.3"/>
</dbReference>
<dbReference type="SMR" id="A6QQ92"/>
<dbReference type="FunCoup" id="A6QQ92">
    <property type="interactions" value="50"/>
</dbReference>
<dbReference type="STRING" id="9913.ENSBTAP00000060825"/>
<dbReference type="MEROPS" id="I04.972"/>
<dbReference type="GlyCosmos" id="A6QQ92">
    <property type="glycosylation" value="1 site, No reported glycans"/>
</dbReference>
<dbReference type="GlyGen" id="A6QQ92">
    <property type="glycosylation" value="1 site"/>
</dbReference>
<dbReference type="PaxDb" id="9913-ENSBTAP00000006956"/>
<dbReference type="Ensembl" id="ENSBTAT00000006956.7">
    <property type="protein sequence ID" value="ENSBTAP00000006956.5"/>
    <property type="gene ID" value="ENSBTAG00000005284.7"/>
</dbReference>
<dbReference type="GeneID" id="513955"/>
<dbReference type="KEGG" id="bta:513955"/>
<dbReference type="CTD" id="647174"/>
<dbReference type="VEuPathDB" id="HostDB:ENSBTAG00000005284"/>
<dbReference type="VGNC" id="VGNC:34477">
    <property type="gene designation" value="SERPINE3"/>
</dbReference>
<dbReference type="eggNOG" id="KOG2392">
    <property type="taxonomic scope" value="Eukaryota"/>
</dbReference>
<dbReference type="GeneTree" id="ENSGT00940000160941"/>
<dbReference type="HOGENOM" id="CLU_023330_0_4_1"/>
<dbReference type="InParanoid" id="A6QQ92"/>
<dbReference type="OMA" id="KGNCISY"/>
<dbReference type="OrthoDB" id="8179360at2759"/>
<dbReference type="TreeFam" id="TF352620"/>
<dbReference type="ChiTaRS" id="SERPINE3">
    <property type="organism name" value="cattle"/>
</dbReference>
<dbReference type="Proteomes" id="UP000009136">
    <property type="component" value="Chromosome 12"/>
</dbReference>
<dbReference type="Bgee" id="ENSBTAG00000005284">
    <property type="expression patterns" value="Expressed in cardiac ventricle and 88 other cell types or tissues"/>
</dbReference>
<dbReference type="GO" id="GO:0005615">
    <property type="term" value="C:extracellular space"/>
    <property type="evidence" value="ECO:0000318"/>
    <property type="project" value="GO_Central"/>
</dbReference>
<dbReference type="GO" id="GO:0004867">
    <property type="term" value="F:serine-type endopeptidase inhibitor activity"/>
    <property type="evidence" value="ECO:0000318"/>
    <property type="project" value="GO_Central"/>
</dbReference>
<dbReference type="CDD" id="cd19574">
    <property type="entry name" value="serpinE3"/>
    <property type="match status" value="1"/>
</dbReference>
<dbReference type="Gene3D" id="2.30.39.10">
    <property type="entry name" value="Alpha-1-antitrypsin, domain 1"/>
    <property type="match status" value="1"/>
</dbReference>
<dbReference type="Gene3D" id="3.30.497.10">
    <property type="entry name" value="Antithrombin, subunit I, domain 2"/>
    <property type="match status" value="1"/>
</dbReference>
<dbReference type="InterPro" id="IPR023795">
    <property type="entry name" value="Serpin_CS"/>
</dbReference>
<dbReference type="InterPro" id="IPR023796">
    <property type="entry name" value="Serpin_dom"/>
</dbReference>
<dbReference type="InterPro" id="IPR031172">
    <property type="entry name" value="Serpin_E3"/>
</dbReference>
<dbReference type="InterPro" id="IPR000215">
    <property type="entry name" value="Serpin_fam"/>
</dbReference>
<dbReference type="InterPro" id="IPR036186">
    <property type="entry name" value="Serpin_sf"/>
</dbReference>
<dbReference type="InterPro" id="IPR042178">
    <property type="entry name" value="Serpin_sf_1"/>
</dbReference>
<dbReference type="InterPro" id="IPR042185">
    <property type="entry name" value="Serpin_sf_2"/>
</dbReference>
<dbReference type="PANTHER" id="PTHR11461">
    <property type="entry name" value="SERINE PROTEASE INHIBITOR, SERPIN"/>
    <property type="match status" value="1"/>
</dbReference>
<dbReference type="PANTHER" id="PTHR11461:SF129">
    <property type="entry name" value="SERPIN E3"/>
    <property type="match status" value="1"/>
</dbReference>
<dbReference type="Pfam" id="PF00079">
    <property type="entry name" value="Serpin"/>
    <property type="match status" value="1"/>
</dbReference>
<dbReference type="SMART" id="SM00093">
    <property type="entry name" value="SERPIN"/>
    <property type="match status" value="1"/>
</dbReference>
<dbReference type="SUPFAM" id="SSF56574">
    <property type="entry name" value="Serpins"/>
    <property type="match status" value="1"/>
</dbReference>
<dbReference type="PROSITE" id="PS00284">
    <property type="entry name" value="SERPIN"/>
    <property type="match status" value="1"/>
</dbReference>
<organism>
    <name type="scientific">Bos taurus</name>
    <name type="common">Bovine</name>
    <dbReference type="NCBI Taxonomy" id="9913"/>
    <lineage>
        <taxon>Eukaryota</taxon>
        <taxon>Metazoa</taxon>
        <taxon>Chordata</taxon>
        <taxon>Craniata</taxon>
        <taxon>Vertebrata</taxon>
        <taxon>Euteleostomi</taxon>
        <taxon>Mammalia</taxon>
        <taxon>Eutheria</taxon>
        <taxon>Laurasiatheria</taxon>
        <taxon>Artiodactyla</taxon>
        <taxon>Ruminantia</taxon>
        <taxon>Pecora</taxon>
        <taxon>Bovidae</taxon>
        <taxon>Bovinae</taxon>
        <taxon>Bos</taxon>
    </lineage>
</organism>
<reference key="1">
    <citation type="journal article" date="2009" name="Science">
        <title>The genome sequence of taurine cattle: a window to ruminant biology and evolution.</title>
        <authorList>
            <consortium name="The bovine genome sequencing and analysis consortium"/>
        </authorList>
    </citation>
    <scope>NUCLEOTIDE SEQUENCE [LARGE SCALE GENOMIC DNA]</scope>
    <source>
        <strain>Hereford</strain>
    </source>
</reference>
<reference key="2">
    <citation type="submission" date="2007-07" db="EMBL/GenBank/DDBJ databases">
        <authorList>
            <consortium name="NIH - Mammalian Gene Collection (MGC) project"/>
        </authorList>
    </citation>
    <scope>NUCLEOTIDE SEQUENCE [LARGE SCALE MRNA]</scope>
    <source>
        <strain>Hereford</strain>
        <tissue>Heart ventricle</tissue>
    </source>
</reference>
<evidence type="ECO:0000250" key="1"/>
<evidence type="ECO:0000255" key="2"/>
<evidence type="ECO:0000305" key="3"/>
<comment type="function">
    <text evidence="1">Probable serine protease inhibitor.</text>
</comment>
<comment type="subcellular location">
    <subcellularLocation>
        <location evidence="3">Secreted</location>
    </subcellularLocation>
</comment>
<comment type="similarity">
    <text evidence="3">Belongs to the serpin family.</text>
</comment>
<gene>
    <name type="primary">SERPINE3</name>
</gene>